<sequence length="101" mass="11353">MAKKSAVNRNLAVKALVKQYASKRVALKAIANDESLPLEERFEARLKLAKLPRSSSAVRIRNRCEVTGRPRAYYRKLKMSRIALRELGSSGQIPGLVKSSW</sequence>
<gene>
    <name evidence="1" type="primary">rpsN</name>
    <name type="ordered locus">Caul_1627</name>
</gene>
<evidence type="ECO:0000255" key="1">
    <source>
        <dbReference type="HAMAP-Rule" id="MF_00537"/>
    </source>
</evidence>
<evidence type="ECO:0000305" key="2"/>
<reference key="1">
    <citation type="submission" date="2008-01" db="EMBL/GenBank/DDBJ databases">
        <title>Complete sequence of chromosome of Caulobacter sp. K31.</title>
        <authorList>
            <consortium name="US DOE Joint Genome Institute"/>
            <person name="Copeland A."/>
            <person name="Lucas S."/>
            <person name="Lapidus A."/>
            <person name="Barry K."/>
            <person name="Glavina del Rio T."/>
            <person name="Dalin E."/>
            <person name="Tice H."/>
            <person name="Pitluck S."/>
            <person name="Bruce D."/>
            <person name="Goodwin L."/>
            <person name="Thompson L.S."/>
            <person name="Brettin T."/>
            <person name="Detter J.C."/>
            <person name="Han C."/>
            <person name="Schmutz J."/>
            <person name="Larimer F."/>
            <person name="Land M."/>
            <person name="Hauser L."/>
            <person name="Kyrpides N."/>
            <person name="Kim E."/>
            <person name="Stephens C."/>
            <person name="Richardson P."/>
        </authorList>
    </citation>
    <scope>NUCLEOTIDE SEQUENCE [LARGE SCALE GENOMIC DNA]</scope>
    <source>
        <strain>K31</strain>
    </source>
</reference>
<dbReference type="EMBL" id="CP000927">
    <property type="protein sequence ID" value="ABZ70756.1"/>
    <property type="molecule type" value="Genomic_DNA"/>
</dbReference>
<dbReference type="SMR" id="B0T2D5"/>
<dbReference type="STRING" id="366602.Caul_1627"/>
<dbReference type="KEGG" id="cak:Caul_1627"/>
<dbReference type="eggNOG" id="COG0199">
    <property type="taxonomic scope" value="Bacteria"/>
</dbReference>
<dbReference type="HOGENOM" id="CLU_139869_0_1_5"/>
<dbReference type="OrthoDB" id="9810484at2"/>
<dbReference type="GO" id="GO:0005737">
    <property type="term" value="C:cytoplasm"/>
    <property type="evidence" value="ECO:0007669"/>
    <property type="project" value="UniProtKB-ARBA"/>
</dbReference>
<dbReference type="GO" id="GO:0015935">
    <property type="term" value="C:small ribosomal subunit"/>
    <property type="evidence" value="ECO:0007669"/>
    <property type="project" value="TreeGrafter"/>
</dbReference>
<dbReference type="GO" id="GO:0019843">
    <property type="term" value="F:rRNA binding"/>
    <property type="evidence" value="ECO:0007669"/>
    <property type="project" value="UniProtKB-UniRule"/>
</dbReference>
<dbReference type="GO" id="GO:0003735">
    <property type="term" value="F:structural constituent of ribosome"/>
    <property type="evidence" value="ECO:0007669"/>
    <property type="project" value="InterPro"/>
</dbReference>
<dbReference type="GO" id="GO:0006412">
    <property type="term" value="P:translation"/>
    <property type="evidence" value="ECO:0007669"/>
    <property type="project" value="UniProtKB-UniRule"/>
</dbReference>
<dbReference type="FunFam" id="1.10.287.1480:FF:000001">
    <property type="entry name" value="30S ribosomal protein S14"/>
    <property type="match status" value="1"/>
</dbReference>
<dbReference type="Gene3D" id="1.10.287.1480">
    <property type="match status" value="1"/>
</dbReference>
<dbReference type="HAMAP" id="MF_00537">
    <property type="entry name" value="Ribosomal_uS14_1"/>
    <property type="match status" value="1"/>
</dbReference>
<dbReference type="InterPro" id="IPR001209">
    <property type="entry name" value="Ribosomal_uS14"/>
</dbReference>
<dbReference type="InterPro" id="IPR023036">
    <property type="entry name" value="Ribosomal_uS14_bac/plastid"/>
</dbReference>
<dbReference type="InterPro" id="IPR018271">
    <property type="entry name" value="Ribosomal_uS14_CS"/>
</dbReference>
<dbReference type="NCBIfam" id="NF006477">
    <property type="entry name" value="PRK08881.1"/>
    <property type="match status" value="1"/>
</dbReference>
<dbReference type="PANTHER" id="PTHR19836">
    <property type="entry name" value="30S RIBOSOMAL PROTEIN S14"/>
    <property type="match status" value="1"/>
</dbReference>
<dbReference type="PANTHER" id="PTHR19836:SF19">
    <property type="entry name" value="SMALL RIBOSOMAL SUBUNIT PROTEIN US14M"/>
    <property type="match status" value="1"/>
</dbReference>
<dbReference type="Pfam" id="PF00253">
    <property type="entry name" value="Ribosomal_S14"/>
    <property type="match status" value="1"/>
</dbReference>
<dbReference type="SUPFAM" id="SSF57716">
    <property type="entry name" value="Glucocorticoid receptor-like (DNA-binding domain)"/>
    <property type="match status" value="1"/>
</dbReference>
<dbReference type="PROSITE" id="PS00527">
    <property type="entry name" value="RIBOSOMAL_S14"/>
    <property type="match status" value="1"/>
</dbReference>
<organism>
    <name type="scientific">Caulobacter sp. (strain K31)</name>
    <dbReference type="NCBI Taxonomy" id="366602"/>
    <lineage>
        <taxon>Bacteria</taxon>
        <taxon>Pseudomonadati</taxon>
        <taxon>Pseudomonadota</taxon>
        <taxon>Alphaproteobacteria</taxon>
        <taxon>Caulobacterales</taxon>
        <taxon>Caulobacteraceae</taxon>
        <taxon>Caulobacter</taxon>
    </lineage>
</organism>
<protein>
    <recommendedName>
        <fullName evidence="1">Small ribosomal subunit protein uS14</fullName>
    </recommendedName>
    <alternativeName>
        <fullName evidence="2">30S ribosomal protein S14</fullName>
    </alternativeName>
</protein>
<comment type="function">
    <text evidence="1">Binds 16S rRNA, required for the assembly of 30S particles and may also be responsible for determining the conformation of the 16S rRNA at the A site.</text>
</comment>
<comment type="subunit">
    <text evidence="1">Part of the 30S ribosomal subunit. Contacts proteins S3 and S10.</text>
</comment>
<comment type="similarity">
    <text evidence="1">Belongs to the universal ribosomal protein uS14 family.</text>
</comment>
<proteinExistence type="inferred from homology"/>
<name>RS14_CAUSK</name>
<feature type="chain" id="PRO_1000128347" description="Small ribosomal subunit protein uS14">
    <location>
        <begin position="1"/>
        <end position="101"/>
    </location>
</feature>
<accession>B0T2D5</accession>
<keyword id="KW-0687">Ribonucleoprotein</keyword>
<keyword id="KW-0689">Ribosomal protein</keyword>
<keyword id="KW-0694">RNA-binding</keyword>
<keyword id="KW-0699">rRNA-binding</keyword>